<keyword id="KW-0067">ATP-binding</keyword>
<keyword id="KW-0963">Cytoplasm</keyword>
<keyword id="KW-0436">Ligase</keyword>
<keyword id="KW-0547">Nucleotide-binding</keyword>
<keyword id="KW-0566">Pantothenate biosynthesis</keyword>
<evidence type="ECO:0000255" key="1">
    <source>
        <dbReference type="HAMAP-Rule" id="MF_00158"/>
    </source>
</evidence>
<protein>
    <recommendedName>
        <fullName evidence="1">Pantothenate synthetase</fullName>
        <shortName evidence="1">PS</shortName>
        <ecNumber evidence="1">6.3.2.1</ecNumber>
    </recommendedName>
    <alternativeName>
        <fullName evidence="1">Pantoate--beta-alanine ligase</fullName>
    </alternativeName>
    <alternativeName>
        <fullName evidence="1">Pantoate-activating enzyme</fullName>
    </alternativeName>
</protein>
<accession>B7NI93</accession>
<proteinExistence type="inferred from homology"/>
<feature type="chain" id="PRO_1000118147" description="Pantothenate synthetase">
    <location>
        <begin position="1"/>
        <end position="283"/>
    </location>
</feature>
<feature type="active site" description="Proton donor" evidence="1">
    <location>
        <position position="37"/>
    </location>
</feature>
<feature type="binding site" evidence="1">
    <location>
        <begin position="30"/>
        <end position="37"/>
    </location>
    <ligand>
        <name>ATP</name>
        <dbReference type="ChEBI" id="CHEBI:30616"/>
    </ligand>
</feature>
<feature type="binding site" evidence="1">
    <location>
        <position position="61"/>
    </location>
    <ligand>
        <name>(R)-pantoate</name>
        <dbReference type="ChEBI" id="CHEBI:15980"/>
    </ligand>
</feature>
<feature type="binding site" evidence="1">
    <location>
        <position position="61"/>
    </location>
    <ligand>
        <name>beta-alanine</name>
        <dbReference type="ChEBI" id="CHEBI:57966"/>
    </ligand>
</feature>
<feature type="binding site" evidence="1">
    <location>
        <begin position="149"/>
        <end position="152"/>
    </location>
    <ligand>
        <name>ATP</name>
        <dbReference type="ChEBI" id="CHEBI:30616"/>
    </ligand>
</feature>
<feature type="binding site" evidence="1">
    <location>
        <position position="155"/>
    </location>
    <ligand>
        <name>(R)-pantoate</name>
        <dbReference type="ChEBI" id="CHEBI:15980"/>
    </ligand>
</feature>
<feature type="binding site" evidence="1">
    <location>
        <begin position="186"/>
        <end position="189"/>
    </location>
    <ligand>
        <name>ATP</name>
        <dbReference type="ChEBI" id="CHEBI:30616"/>
    </ligand>
</feature>
<name>PANC_ECO7I</name>
<sequence>MLIIETLPLLRQQIRRLRMEGKRVALVPTMGNLHDGHMKLVDEAKARADVVVVSIFVNPMQFDRPEDLARYPRTLQEDCEKLNKRKVDLVFAPSVKEIYPNGTETHTYVDVPGLSTMLEGASRPGHFRGVSTIVSKLFNLVQPDIACFGEKDFQQLALIRKMVADMGFDIEIVGVPIMRAKDGLALSSRNGYLTAEQRKIAPGLYKVLSSIADKLQAGERDLDEIIAIAGQELNEKGFRSDDIQIRDADTLLEISENSKRAVILVAAWLGDARLIDNKMVELA</sequence>
<comment type="function">
    <text evidence="1">Catalyzes the condensation of pantoate with beta-alanine in an ATP-dependent reaction via a pantoyl-adenylate intermediate.</text>
</comment>
<comment type="catalytic activity">
    <reaction evidence="1">
        <text>(R)-pantoate + beta-alanine + ATP = (R)-pantothenate + AMP + diphosphate + H(+)</text>
        <dbReference type="Rhea" id="RHEA:10912"/>
        <dbReference type="ChEBI" id="CHEBI:15378"/>
        <dbReference type="ChEBI" id="CHEBI:15980"/>
        <dbReference type="ChEBI" id="CHEBI:29032"/>
        <dbReference type="ChEBI" id="CHEBI:30616"/>
        <dbReference type="ChEBI" id="CHEBI:33019"/>
        <dbReference type="ChEBI" id="CHEBI:57966"/>
        <dbReference type="ChEBI" id="CHEBI:456215"/>
        <dbReference type="EC" id="6.3.2.1"/>
    </reaction>
</comment>
<comment type="pathway">
    <text evidence="1">Cofactor biosynthesis; (R)-pantothenate biosynthesis; (R)-pantothenate from (R)-pantoate and beta-alanine: step 1/1.</text>
</comment>
<comment type="subunit">
    <text evidence="1">Homodimer.</text>
</comment>
<comment type="subcellular location">
    <subcellularLocation>
        <location evidence="1">Cytoplasm</location>
    </subcellularLocation>
</comment>
<comment type="miscellaneous">
    <text evidence="1">The reaction proceeds by a bi uni uni bi ping pong mechanism.</text>
</comment>
<comment type="similarity">
    <text evidence="1">Belongs to the pantothenate synthetase family.</text>
</comment>
<organism>
    <name type="scientific">Escherichia coli O7:K1 (strain IAI39 / ExPEC)</name>
    <dbReference type="NCBI Taxonomy" id="585057"/>
    <lineage>
        <taxon>Bacteria</taxon>
        <taxon>Pseudomonadati</taxon>
        <taxon>Pseudomonadota</taxon>
        <taxon>Gammaproteobacteria</taxon>
        <taxon>Enterobacterales</taxon>
        <taxon>Enterobacteriaceae</taxon>
        <taxon>Escherichia</taxon>
    </lineage>
</organism>
<reference key="1">
    <citation type="journal article" date="2009" name="PLoS Genet.">
        <title>Organised genome dynamics in the Escherichia coli species results in highly diverse adaptive paths.</title>
        <authorList>
            <person name="Touchon M."/>
            <person name="Hoede C."/>
            <person name="Tenaillon O."/>
            <person name="Barbe V."/>
            <person name="Baeriswyl S."/>
            <person name="Bidet P."/>
            <person name="Bingen E."/>
            <person name="Bonacorsi S."/>
            <person name="Bouchier C."/>
            <person name="Bouvet O."/>
            <person name="Calteau A."/>
            <person name="Chiapello H."/>
            <person name="Clermont O."/>
            <person name="Cruveiller S."/>
            <person name="Danchin A."/>
            <person name="Diard M."/>
            <person name="Dossat C."/>
            <person name="Karoui M.E."/>
            <person name="Frapy E."/>
            <person name="Garry L."/>
            <person name="Ghigo J.M."/>
            <person name="Gilles A.M."/>
            <person name="Johnson J."/>
            <person name="Le Bouguenec C."/>
            <person name="Lescat M."/>
            <person name="Mangenot S."/>
            <person name="Martinez-Jehanne V."/>
            <person name="Matic I."/>
            <person name="Nassif X."/>
            <person name="Oztas S."/>
            <person name="Petit M.A."/>
            <person name="Pichon C."/>
            <person name="Rouy Z."/>
            <person name="Ruf C.S."/>
            <person name="Schneider D."/>
            <person name="Tourret J."/>
            <person name="Vacherie B."/>
            <person name="Vallenet D."/>
            <person name="Medigue C."/>
            <person name="Rocha E.P.C."/>
            <person name="Denamur E."/>
        </authorList>
    </citation>
    <scope>NUCLEOTIDE SEQUENCE [LARGE SCALE GENOMIC DNA]</scope>
    <source>
        <strain>IAI39 / ExPEC</strain>
    </source>
</reference>
<gene>
    <name evidence="1" type="primary">panC</name>
    <name type="ordered locus">ECIAI39_0134</name>
</gene>
<dbReference type="EC" id="6.3.2.1" evidence="1"/>
<dbReference type="EMBL" id="CU928164">
    <property type="protein sequence ID" value="CAR16274.1"/>
    <property type="molecule type" value="Genomic_DNA"/>
</dbReference>
<dbReference type="RefSeq" id="WP_000905379.1">
    <property type="nucleotide sequence ID" value="NC_011750.1"/>
</dbReference>
<dbReference type="RefSeq" id="YP_002406182.1">
    <property type="nucleotide sequence ID" value="NC_011750.1"/>
</dbReference>
<dbReference type="SMR" id="B7NI93"/>
<dbReference type="STRING" id="585057.ECIAI39_0134"/>
<dbReference type="GeneID" id="75058760"/>
<dbReference type="KEGG" id="ect:ECIAI39_0134"/>
<dbReference type="PATRIC" id="fig|585057.6.peg.144"/>
<dbReference type="HOGENOM" id="CLU_047148_0_0_6"/>
<dbReference type="UniPathway" id="UPA00028">
    <property type="reaction ID" value="UER00005"/>
</dbReference>
<dbReference type="Proteomes" id="UP000000749">
    <property type="component" value="Chromosome"/>
</dbReference>
<dbReference type="GO" id="GO:0005829">
    <property type="term" value="C:cytosol"/>
    <property type="evidence" value="ECO:0007669"/>
    <property type="project" value="TreeGrafter"/>
</dbReference>
<dbReference type="GO" id="GO:0005524">
    <property type="term" value="F:ATP binding"/>
    <property type="evidence" value="ECO:0007669"/>
    <property type="project" value="UniProtKB-KW"/>
</dbReference>
<dbReference type="GO" id="GO:0004592">
    <property type="term" value="F:pantoate-beta-alanine ligase activity"/>
    <property type="evidence" value="ECO:0007669"/>
    <property type="project" value="UniProtKB-UniRule"/>
</dbReference>
<dbReference type="GO" id="GO:0015940">
    <property type="term" value="P:pantothenate biosynthetic process"/>
    <property type="evidence" value="ECO:0007669"/>
    <property type="project" value="UniProtKB-UniRule"/>
</dbReference>
<dbReference type="CDD" id="cd00560">
    <property type="entry name" value="PanC"/>
    <property type="match status" value="1"/>
</dbReference>
<dbReference type="FunFam" id="3.30.1300.10:FF:000001">
    <property type="entry name" value="Pantothenate synthetase"/>
    <property type="match status" value="1"/>
</dbReference>
<dbReference type="FunFam" id="3.40.50.620:FF:000013">
    <property type="entry name" value="Pantothenate synthetase"/>
    <property type="match status" value="1"/>
</dbReference>
<dbReference type="Gene3D" id="3.40.50.620">
    <property type="entry name" value="HUPs"/>
    <property type="match status" value="1"/>
</dbReference>
<dbReference type="Gene3D" id="3.30.1300.10">
    <property type="entry name" value="Pantoate-beta-alanine ligase, C-terminal domain"/>
    <property type="match status" value="1"/>
</dbReference>
<dbReference type="HAMAP" id="MF_00158">
    <property type="entry name" value="PanC"/>
    <property type="match status" value="1"/>
</dbReference>
<dbReference type="InterPro" id="IPR004821">
    <property type="entry name" value="Cyt_trans-like"/>
</dbReference>
<dbReference type="InterPro" id="IPR003721">
    <property type="entry name" value="Pantoate_ligase"/>
</dbReference>
<dbReference type="InterPro" id="IPR042176">
    <property type="entry name" value="Pantoate_ligase_C"/>
</dbReference>
<dbReference type="InterPro" id="IPR014729">
    <property type="entry name" value="Rossmann-like_a/b/a_fold"/>
</dbReference>
<dbReference type="NCBIfam" id="TIGR00125">
    <property type="entry name" value="cyt_tran_rel"/>
    <property type="match status" value="1"/>
</dbReference>
<dbReference type="NCBIfam" id="TIGR00018">
    <property type="entry name" value="panC"/>
    <property type="match status" value="1"/>
</dbReference>
<dbReference type="PANTHER" id="PTHR21299">
    <property type="entry name" value="CYTIDYLATE KINASE/PANTOATE-BETA-ALANINE LIGASE"/>
    <property type="match status" value="1"/>
</dbReference>
<dbReference type="PANTHER" id="PTHR21299:SF1">
    <property type="entry name" value="PANTOATE--BETA-ALANINE LIGASE"/>
    <property type="match status" value="1"/>
</dbReference>
<dbReference type="Pfam" id="PF02569">
    <property type="entry name" value="Pantoate_ligase"/>
    <property type="match status" value="1"/>
</dbReference>
<dbReference type="SUPFAM" id="SSF52374">
    <property type="entry name" value="Nucleotidylyl transferase"/>
    <property type="match status" value="1"/>
</dbReference>